<feature type="chain" id="PRO_1000123045" description="Iron-sulfur cluster assembly protein CyaY">
    <location>
        <begin position="1"/>
        <end position="106"/>
    </location>
</feature>
<comment type="function">
    <text evidence="1">Involved in iron-sulfur (Fe-S) cluster assembly. May act as a regulator of Fe-S biogenesis.</text>
</comment>
<comment type="similarity">
    <text evidence="1">Belongs to the frataxin family.</text>
</comment>
<reference key="1">
    <citation type="journal article" date="2009" name="PLoS Genet.">
        <title>Organised genome dynamics in the Escherichia coli species results in highly diverse adaptive paths.</title>
        <authorList>
            <person name="Touchon M."/>
            <person name="Hoede C."/>
            <person name="Tenaillon O."/>
            <person name="Barbe V."/>
            <person name="Baeriswyl S."/>
            <person name="Bidet P."/>
            <person name="Bingen E."/>
            <person name="Bonacorsi S."/>
            <person name="Bouchier C."/>
            <person name="Bouvet O."/>
            <person name="Calteau A."/>
            <person name="Chiapello H."/>
            <person name="Clermont O."/>
            <person name="Cruveiller S."/>
            <person name="Danchin A."/>
            <person name="Diard M."/>
            <person name="Dossat C."/>
            <person name="Karoui M.E."/>
            <person name="Frapy E."/>
            <person name="Garry L."/>
            <person name="Ghigo J.M."/>
            <person name="Gilles A.M."/>
            <person name="Johnson J."/>
            <person name="Le Bouguenec C."/>
            <person name="Lescat M."/>
            <person name="Mangenot S."/>
            <person name="Martinez-Jehanne V."/>
            <person name="Matic I."/>
            <person name="Nassif X."/>
            <person name="Oztas S."/>
            <person name="Petit M.A."/>
            <person name="Pichon C."/>
            <person name="Rouy Z."/>
            <person name="Ruf C.S."/>
            <person name="Schneider D."/>
            <person name="Tourret J."/>
            <person name="Vacherie B."/>
            <person name="Vallenet D."/>
            <person name="Medigue C."/>
            <person name="Rocha E.P.C."/>
            <person name="Denamur E."/>
        </authorList>
    </citation>
    <scope>NUCLEOTIDE SEQUENCE [LARGE SCALE GENOMIC DNA]</scope>
    <source>
        <strain>ED1a</strain>
    </source>
</reference>
<dbReference type="EMBL" id="CU928162">
    <property type="protein sequence ID" value="CAR10468.1"/>
    <property type="molecule type" value="Genomic_DNA"/>
</dbReference>
<dbReference type="RefSeq" id="WP_000999936.1">
    <property type="nucleotide sequence ID" value="NC_011745.1"/>
</dbReference>
<dbReference type="SMR" id="B7N297"/>
<dbReference type="KEGG" id="ecq:ECED1_4492"/>
<dbReference type="HOGENOM" id="CLU_080880_3_0_6"/>
<dbReference type="Proteomes" id="UP000000748">
    <property type="component" value="Chromosome"/>
</dbReference>
<dbReference type="GO" id="GO:0005829">
    <property type="term" value="C:cytosol"/>
    <property type="evidence" value="ECO:0007669"/>
    <property type="project" value="TreeGrafter"/>
</dbReference>
<dbReference type="GO" id="GO:0008199">
    <property type="term" value="F:ferric iron binding"/>
    <property type="evidence" value="ECO:0007669"/>
    <property type="project" value="InterPro"/>
</dbReference>
<dbReference type="GO" id="GO:0008198">
    <property type="term" value="F:ferrous iron binding"/>
    <property type="evidence" value="ECO:0007669"/>
    <property type="project" value="TreeGrafter"/>
</dbReference>
<dbReference type="GO" id="GO:0016226">
    <property type="term" value="P:iron-sulfur cluster assembly"/>
    <property type="evidence" value="ECO:0007669"/>
    <property type="project" value="UniProtKB-UniRule"/>
</dbReference>
<dbReference type="CDD" id="cd00503">
    <property type="entry name" value="Frataxin"/>
    <property type="match status" value="1"/>
</dbReference>
<dbReference type="FunFam" id="3.30.920.10:FF:000001">
    <property type="entry name" value="Iron-sulfur cluster assembly protein CyaY"/>
    <property type="match status" value="1"/>
</dbReference>
<dbReference type="Gene3D" id="3.30.920.10">
    <property type="entry name" value="Frataxin/CyaY"/>
    <property type="match status" value="1"/>
</dbReference>
<dbReference type="HAMAP" id="MF_00142">
    <property type="entry name" value="CyaY"/>
    <property type="match status" value="1"/>
</dbReference>
<dbReference type="InterPro" id="IPR047584">
    <property type="entry name" value="CyaY"/>
</dbReference>
<dbReference type="InterPro" id="IPR002908">
    <property type="entry name" value="Frataxin/CyaY"/>
</dbReference>
<dbReference type="InterPro" id="IPR036524">
    <property type="entry name" value="Frataxin/CyaY_sf"/>
</dbReference>
<dbReference type="InterPro" id="IPR020895">
    <property type="entry name" value="Frataxin_CS"/>
</dbReference>
<dbReference type="NCBIfam" id="TIGR03421">
    <property type="entry name" value="FeS_CyaY"/>
    <property type="match status" value="1"/>
</dbReference>
<dbReference type="PANTHER" id="PTHR16821">
    <property type="entry name" value="FRATAXIN"/>
    <property type="match status" value="1"/>
</dbReference>
<dbReference type="PANTHER" id="PTHR16821:SF2">
    <property type="entry name" value="FRATAXIN, MITOCHONDRIAL"/>
    <property type="match status" value="1"/>
</dbReference>
<dbReference type="Pfam" id="PF01491">
    <property type="entry name" value="Frataxin_Cyay"/>
    <property type="match status" value="1"/>
</dbReference>
<dbReference type="SMART" id="SM01219">
    <property type="entry name" value="Frataxin_Cyay"/>
    <property type="match status" value="1"/>
</dbReference>
<dbReference type="SUPFAM" id="SSF55387">
    <property type="entry name" value="Frataxin/Nqo15-like"/>
    <property type="match status" value="1"/>
</dbReference>
<dbReference type="PROSITE" id="PS01344">
    <property type="entry name" value="FRATAXIN_1"/>
    <property type="match status" value="1"/>
</dbReference>
<dbReference type="PROSITE" id="PS50810">
    <property type="entry name" value="FRATAXIN_2"/>
    <property type="match status" value="1"/>
</dbReference>
<name>CYAY_ECO81</name>
<organism>
    <name type="scientific">Escherichia coli O81 (strain ED1a)</name>
    <dbReference type="NCBI Taxonomy" id="585397"/>
    <lineage>
        <taxon>Bacteria</taxon>
        <taxon>Pseudomonadati</taxon>
        <taxon>Pseudomonadota</taxon>
        <taxon>Gammaproteobacteria</taxon>
        <taxon>Enterobacterales</taxon>
        <taxon>Enterobacteriaceae</taxon>
        <taxon>Escherichia</taxon>
    </lineage>
</organism>
<sequence>MNDSEFHRLADQLWLTIEEHLDDWDGDSDIDCEINGGVLTITFENGSKIIINRQEPLHQVWLATKQGGYHFDLKGDEWICDRSGETFWDLLEQAATQQAGETVSFR</sequence>
<evidence type="ECO:0000255" key="1">
    <source>
        <dbReference type="HAMAP-Rule" id="MF_00142"/>
    </source>
</evidence>
<gene>
    <name evidence="1" type="primary">cyaY</name>
    <name type="ordered locus">ECED1_4492</name>
</gene>
<keyword id="KW-0408">Iron</keyword>
<keyword id="KW-0479">Metal-binding</keyword>
<proteinExistence type="inferred from homology"/>
<accession>B7N297</accession>
<protein>
    <recommendedName>
        <fullName evidence="1">Iron-sulfur cluster assembly protein CyaY</fullName>
    </recommendedName>
</protein>